<keyword id="KW-0244">Early protein</keyword>
<keyword id="KW-1048">Host nucleus</keyword>
<keyword id="KW-1185">Reference proteome</keyword>
<organism>
    <name type="scientific">Vaccinia virus (strain Western Reserve)</name>
    <name type="common">VACV</name>
    <name type="synonym">Vaccinia virus (strain WR)</name>
    <dbReference type="NCBI Taxonomy" id="10254"/>
    <lineage>
        <taxon>Viruses</taxon>
        <taxon>Varidnaviria</taxon>
        <taxon>Bamfordvirae</taxon>
        <taxon>Nucleocytoviricota</taxon>
        <taxon>Pokkesviricetes</taxon>
        <taxon>Chitovirales</taxon>
        <taxon>Poxviridae</taxon>
        <taxon>Chordopoxvirinae</taxon>
        <taxon>Orthopoxvirus</taxon>
        <taxon>Vaccinia virus</taxon>
    </lineage>
</organism>
<protein>
    <recommendedName>
        <fullName>Protein OPG061</fullName>
    </recommendedName>
    <alternativeName>
        <fullName>Protein F16</fullName>
    </alternativeName>
</protein>
<organismHost>
    <name type="scientific">Bos taurus</name>
    <name type="common">Bovine</name>
    <dbReference type="NCBI Taxonomy" id="9913"/>
</organismHost>
<gene>
    <name type="primary">OPG061</name>
    <name type="ordered locus">VACWR055</name>
    <name type="ORF">F16L</name>
</gene>
<comment type="subcellular location">
    <subcellularLocation>
        <location evidence="2">Host nucleus</location>
        <location evidence="2">Host nucleolus</location>
    </subcellularLocation>
</comment>
<comment type="induction">
    <text evidence="3">Expressed in the early phase of the viral replicative cycle.</text>
</comment>
<comment type="similarity">
    <text evidence="4">Belongs to the orthopoxvirus OPG058 family.</text>
</comment>
<evidence type="ECO:0000255" key="1"/>
<evidence type="ECO:0000269" key="2">
    <source>
    </source>
</evidence>
<evidence type="ECO:0000269" key="3">
    <source>
    </source>
</evidence>
<evidence type="ECO:0000305" key="4"/>
<accession>Q80HX3</accession>
<sequence length="231" mass="26548">MKVVIVTSVASLLDASIQFQKTACRHHCNYLSMQVVKEIEEFGTINEKNLEFDTWKDVIQNDEIDALVFYRVKQISISTGVLYKSMMRNRTKPISMYFVRDCLAFDGDPPSFRMTSCNINAYNRSKIKDLIILMNMKTCNKKIIGEFIIDNFGSVDALLSIINSNVTWITSVINNSNGRGINIRVSNNKMLTITSFRRFVNKLKMYKTTKCASQLDNLCTEMNKMDIIDKK</sequence>
<feature type="chain" id="PRO_0000418530" description="Protein OPG061" evidence="1">
    <location>
        <begin position="1"/>
        <end position="231"/>
    </location>
</feature>
<dbReference type="EMBL" id="AY243312">
    <property type="protein sequence ID" value="AAO89334.1"/>
    <property type="molecule type" value="Genomic_DNA"/>
</dbReference>
<dbReference type="RefSeq" id="YP_232937.1">
    <property type="nucleotide sequence ID" value="NC_006998.1"/>
</dbReference>
<dbReference type="SMR" id="Q80HX3"/>
<dbReference type="DNASU" id="3707512"/>
<dbReference type="GeneID" id="3707512"/>
<dbReference type="KEGG" id="vg:3707512"/>
<dbReference type="Proteomes" id="UP000000344">
    <property type="component" value="Genome"/>
</dbReference>
<dbReference type="GO" id="GO:0044196">
    <property type="term" value="C:host cell nucleolus"/>
    <property type="evidence" value="ECO:0007669"/>
    <property type="project" value="UniProtKB-SubCell"/>
</dbReference>
<dbReference type="InterPro" id="IPR006798">
    <property type="entry name" value="Poxvirus_F16"/>
</dbReference>
<dbReference type="Pfam" id="PF04708">
    <property type="entry name" value="Pox_F16"/>
    <property type="match status" value="1"/>
</dbReference>
<dbReference type="PIRSF" id="PIRSF015792">
    <property type="entry name" value="VAC_F16L"/>
    <property type="match status" value="1"/>
</dbReference>
<name>PG061_VACCW</name>
<reference key="1">
    <citation type="submission" date="2003-02" db="EMBL/GenBank/DDBJ databases">
        <title>Sequencing of the coding region of Vaccinia-WR to an average 9-fold redundancy and an error rate of 0.16/10kb.</title>
        <authorList>
            <person name="Esposito J.J."/>
            <person name="Frace A.M."/>
            <person name="Sammons S.A."/>
            <person name="Olsen-Rasmussen M."/>
            <person name="Osborne J."/>
            <person name="Wohlhueter R."/>
        </authorList>
    </citation>
    <scope>NUCLEOTIDE SEQUENCE [LARGE SCALE GENOMIC DNA]</scope>
</reference>
<reference key="2">
    <citation type="journal article" date="2011" name="Virology">
        <title>Vaccinia virus F16 protein, a predicted catalytically inactive member of the prokaryotic serine recombinase superfamily, is targeted to nucleoli.</title>
        <authorList>
            <person name="Senkevich T.G."/>
            <person name="Koonin E.V."/>
            <person name="Moss B."/>
        </authorList>
    </citation>
    <scope>SUBCELLULAR LOCATION</scope>
</reference>
<reference key="3">
    <citation type="journal article" date="2015" name="J. Virol.">
        <title>Deciphering poxvirus gene expression by RNA sequencing and ribosome profiling.</title>
        <authorList>
            <person name="Yang Z."/>
            <person name="Cao S."/>
            <person name="Martens C.A."/>
            <person name="Porcella S.F."/>
            <person name="Xie Z."/>
            <person name="Ma M."/>
            <person name="Shen B."/>
            <person name="Moss B."/>
        </authorList>
    </citation>
    <scope>INDUCTION</scope>
</reference>
<proteinExistence type="evidence at transcript level"/>